<comment type="function">
    <text evidence="2">Component of the cytochrome b6-f complex, which mediates electron transfer between photosystem II (PSII) and photosystem I (PSI), cyclic electron flow around PSI, and state transitions.</text>
</comment>
<comment type="cofactor">
    <cofactor evidence="2">
        <name>heme</name>
        <dbReference type="ChEBI" id="CHEBI:30413"/>
    </cofactor>
    <text evidence="2">Binds 1 heme group covalently.</text>
</comment>
<comment type="subunit">
    <text evidence="1">The 4 large subunits of the cytochrome b6-f complex are cytochrome b6, subunit IV (17 kDa polypeptide, petD), cytochrome f and the Rieske protein, while the 4 small subunits are PetG, PetL, PetM and PetN. The complex functions as a dimer (By similarity).</text>
</comment>
<comment type="subcellular location">
    <subcellularLocation>
        <location evidence="2">Plastid</location>
        <location evidence="2">Chloroplast thylakoid membrane</location>
        <topology evidence="2">Single-pass membrane protein</topology>
    </subcellularLocation>
</comment>
<comment type="similarity">
    <text evidence="2">Belongs to the cytochrome f family.</text>
</comment>
<gene>
    <name evidence="2" type="primary">petA</name>
</gene>
<reference key="1">
    <citation type="journal article" date="2006" name="BMC Plant Biol.">
        <title>Rapid and accurate pyrosequencing of angiosperm plastid genomes.</title>
        <authorList>
            <person name="Moore M.J."/>
            <person name="Dhingra A."/>
            <person name="Soltis P.S."/>
            <person name="Shaw R."/>
            <person name="Farmerie W.G."/>
            <person name="Folta K.M."/>
            <person name="Soltis D.E."/>
        </authorList>
    </citation>
    <scope>NUCLEOTIDE SEQUENCE [LARGE SCALE GENOMIC DNA]</scope>
</reference>
<name>CYF_NANDO</name>
<proteinExistence type="inferred from homology"/>
<sequence length="322" mass="35682">MQNRNIFSWVKEQTTRSISVSIMILIYVITWTSISHAYPIFAQQSYENPREATGRIVCANCHLANKPVDIEVPQAVLPDTVFEAVVRIPYDMQLKQVLSNGKRGSLNVGAVLILPEGFELAPPDRISPEMKEKMGNLSFQNYRPTKKNILVIGPVPGQKYSEITFPILSPDPATKKDVYFLKYPIYVGGNRGRGQIYPDGSKSNNTVYNATAAGIVSKIVRKEKGGYELTIADASEGRQVVDIIPPGPELLVSEGESIKLDQPLTSNPNVGGFGQGDAEIVLQDPSRVQGLFFFFASVILAQIFLVLKKKQFEKVQLSEMNF</sequence>
<feature type="signal peptide" evidence="2">
    <location>
        <begin position="1"/>
        <end position="35"/>
    </location>
</feature>
<feature type="chain" id="PRO_0000342073" description="Cytochrome f">
    <location>
        <begin position="36"/>
        <end position="322"/>
    </location>
</feature>
<feature type="transmembrane region" description="Helical" evidence="2">
    <location>
        <begin position="288"/>
        <end position="308"/>
    </location>
</feature>
<feature type="binding site" description="axial binding residue" evidence="2">
    <location>
        <position position="38"/>
    </location>
    <ligand>
        <name>heme</name>
        <dbReference type="ChEBI" id="CHEBI:30413"/>
    </ligand>
    <ligandPart>
        <name>Fe</name>
        <dbReference type="ChEBI" id="CHEBI:18248"/>
    </ligandPart>
</feature>
<feature type="binding site" description="covalent" evidence="2">
    <location>
        <position position="58"/>
    </location>
    <ligand>
        <name>heme</name>
        <dbReference type="ChEBI" id="CHEBI:30413"/>
    </ligand>
</feature>
<feature type="binding site" description="covalent" evidence="2">
    <location>
        <position position="61"/>
    </location>
    <ligand>
        <name>heme</name>
        <dbReference type="ChEBI" id="CHEBI:30413"/>
    </ligand>
</feature>
<feature type="binding site" description="axial binding residue" evidence="2">
    <location>
        <position position="62"/>
    </location>
    <ligand>
        <name>heme</name>
        <dbReference type="ChEBI" id="CHEBI:30413"/>
    </ligand>
    <ligandPart>
        <name>Fe</name>
        <dbReference type="ChEBI" id="CHEBI:18248"/>
    </ligandPart>
</feature>
<organism>
    <name type="scientific">Nandina domestica</name>
    <name type="common">Heavenly bamboo</name>
    <dbReference type="NCBI Taxonomy" id="41776"/>
    <lineage>
        <taxon>Eukaryota</taxon>
        <taxon>Viridiplantae</taxon>
        <taxon>Streptophyta</taxon>
        <taxon>Embryophyta</taxon>
        <taxon>Tracheophyta</taxon>
        <taxon>Spermatophyta</taxon>
        <taxon>Magnoliopsida</taxon>
        <taxon>Ranunculales</taxon>
        <taxon>Berberidaceae</taxon>
        <taxon>Nandinoideae</taxon>
        <taxon>Nandineae</taxon>
        <taxon>Nandina</taxon>
    </lineage>
</organism>
<geneLocation type="chloroplast"/>
<accession>Q09FU8</accession>
<keyword id="KW-0150">Chloroplast</keyword>
<keyword id="KW-0249">Electron transport</keyword>
<keyword id="KW-0349">Heme</keyword>
<keyword id="KW-0408">Iron</keyword>
<keyword id="KW-0472">Membrane</keyword>
<keyword id="KW-0479">Metal-binding</keyword>
<keyword id="KW-0602">Photosynthesis</keyword>
<keyword id="KW-0934">Plastid</keyword>
<keyword id="KW-0732">Signal</keyword>
<keyword id="KW-0793">Thylakoid</keyword>
<keyword id="KW-0812">Transmembrane</keyword>
<keyword id="KW-1133">Transmembrane helix</keyword>
<keyword id="KW-0813">Transport</keyword>
<evidence type="ECO:0000250" key="1"/>
<evidence type="ECO:0000255" key="2">
    <source>
        <dbReference type="HAMAP-Rule" id="MF_00610"/>
    </source>
</evidence>
<protein>
    <recommendedName>
        <fullName evidence="2">Cytochrome f</fullName>
    </recommendedName>
</protein>
<dbReference type="EMBL" id="DQ923117">
    <property type="protein sequence ID" value="ABI49876.1"/>
    <property type="molecule type" value="Genomic_DNA"/>
</dbReference>
<dbReference type="RefSeq" id="YP_740663.1">
    <property type="nucleotide sequence ID" value="NC_008336.1"/>
</dbReference>
<dbReference type="SMR" id="Q09FU8"/>
<dbReference type="GeneID" id="4271609"/>
<dbReference type="GO" id="GO:0009535">
    <property type="term" value="C:chloroplast thylakoid membrane"/>
    <property type="evidence" value="ECO:0007669"/>
    <property type="project" value="UniProtKB-SubCell"/>
</dbReference>
<dbReference type="GO" id="GO:0009055">
    <property type="term" value="F:electron transfer activity"/>
    <property type="evidence" value="ECO:0007669"/>
    <property type="project" value="UniProtKB-UniRule"/>
</dbReference>
<dbReference type="GO" id="GO:0020037">
    <property type="term" value="F:heme binding"/>
    <property type="evidence" value="ECO:0007669"/>
    <property type="project" value="InterPro"/>
</dbReference>
<dbReference type="GO" id="GO:0005506">
    <property type="term" value="F:iron ion binding"/>
    <property type="evidence" value="ECO:0007669"/>
    <property type="project" value="InterPro"/>
</dbReference>
<dbReference type="GO" id="GO:0015979">
    <property type="term" value="P:photosynthesis"/>
    <property type="evidence" value="ECO:0007669"/>
    <property type="project" value="UniProtKB-UniRule"/>
</dbReference>
<dbReference type="FunFam" id="1.20.5.700:FF:000001">
    <property type="entry name" value="Cytochrome f"/>
    <property type="match status" value="1"/>
</dbReference>
<dbReference type="FunFam" id="2.40.50.100:FF:000007">
    <property type="entry name" value="Cytochrome f"/>
    <property type="match status" value="1"/>
</dbReference>
<dbReference type="FunFam" id="2.60.40.830:FF:000001">
    <property type="entry name" value="Cytochrome f"/>
    <property type="match status" value="1"/>
</dbReference>
<dbReference type="Gene3D" id="2.40.50.100">
    <property type="match status" value="1"/>
</dbReference>
<dbReference type="Gene3D" id="2.60.40.830">
    <property type="entry name" value="Cytochrome f large domain"/>
    <property type="match status" value="1"/>
</dbReference>
<dbReference type="Gene3D" id="1.20.5.700">
    <property type="entry name" value="Single helix bin"/>
    <property type="match status" value="1"/>
</dbReference>
<dbReference type="HAMAP" id="MF_00610">
    <property type="entry name" value="Cytb6_f_cytF"/>
    <property type="match status" value="1"/>
</dbReference>
<dbReference type="InterPro" id="IPR024058">
    <property type="entry name" value="Cyt-f_TM"/>
</dbReference>
<dbReference type="InterPro" id="IPR002325">
    <property type="entry name" value="Cyt_f"/>
</dbReference>
<dbReference type="InterPro" id="IPR024094">
    <property type="entry name" value="Cyt_f_lg_dom"/>
</dbReference>
<dbReference type="InterPro" id="IPR036826">
    <property type="entry name" value="Cyt_f_lg_dom_sf"/>
</dbReference>
<dbReference type="InterPro" id="IPR011054">
    <property type="entry name" value="Rudment_hybrid_motif"/>
</dbReference>
<dbReference type="PANTHER" id="PTHR33288">
    <property type="match status" value="1"/>
</dbReference>
<dbReference type="PANTHER" id="PTHR33288:SF10">
    <property type="entry name" value="CYTOCHROME F"/>
    <property type="match status" value="1"/>
</dbReference>
<dbReference type="Pfam" id="PF01333">
    <property type="entry name" value="Apocytochr_F_C"/>
    <property type="match status" value="1"/>
</dbReference>
<dbReference type="Pfam" id="PF16639">
    <property type="entry name" value="Apocytochr_F_N"/>
    <property type="match status" value="1"/>
</dbReference>
<dbReference type="PRINTS" id="PR00610">
    <property type="entry name" value="CYTOCHROMEF"/>
</dbReference>
<dbReference type="SUPFAM" id="SSF103431">
    <property type="entry name" value="Cytochrome f subunit of the cytochrome b6f complex, transmembrane anchor"/>
    <property type="match status" value="1"/>
</dbReference>
<dbReference type="SUPFAM" id="SSF49441">
    <property type="entry name" value="Cytochrome f, large domain"/>
    <property type="match status" value="1"/>
</dbReference>
<dbReference type="SUPFAM" id="SSF51246">
    <property type="entry name" value="Rudiment single hybrid motif"/>
    <property type="match status" value="1"/>
</dbReference>
<dbReference type="PROSITE" id="PS51010">
    <property type="entry name" value="CYTF"/>
    <property type="match status" value="1"/>
</dbReference>